<dbReference type="EC" id="3.4.21.53" evidence="1"/>
<dbReference type="EMBL" id="CP000498">
    <property type="protein sequence ID" value="ABN66580.2"/>
    <property type="molecule type" value="Genomic_DNA"/>
</dbReference>
<dbReference type="RefSeq" id="XP_001384609.2">
    <property type="nucleotide sequence ID" value="XM_001384572.1"/>
</dbReference>
<dbReference type="SMR" id="A3LUF7"/>
<dbReference type="STRING" id="322104.A3LUF7"/>
<dbReference type="GeneID" id="4838390"/>
<dbReference type="KEGG" id="pic:PICST_45980"/>
<dbReference type="eggNOG" id="KOG2004">
    <property type="taxonomic scope" value="Eukaryota"/>
</dbReference>
<dbReference type="HOGENOM" id="CLU_004109_4_0_1"/>
<dbReference type="InParanoid" id="A3LUF7"/>
<dbReference type="OMA" id="RCMNPVI"/>
<dbReference type="OrthoDB" id="2411602at2759"/>
<dbReference type="Proteomes" id="UP000002258">
    <property type="component" value="Chromosome 4"/>
</dbReference>
<dbReference type="GO" id="GO:0005782">
    <property type="term" value="C:peroxisomal matrix"/>
    <property type="evidence" value="ECO:0007669"/>
    <property type="project" value="UniProtKB-SubCell"/>
</dbReference>
<dbReference type="GO" id="GO:0005524">
    <property type="term" value="F:ATP binding"/>
    <property type="evidence" value="ECO:0007669"/>
    <property type="project" value="UniProtKB-UniRule"/>
</dbReference>
<dbReference type="GO" id="GO:0016887">
    <property type="term" value="F:ATP hydrolysis activity"/>
    <property type="evidence" value="ECO:0007669"/>
    <property type="project" value="UniProtKB-UniRule"/>
</dbReference>
<dbReference type="GO" id="GO:0004176">
    <property type="term" value="F:ATP-dependent peptidase activity"/>
    <property type="evidence" value="ECO:0007669"/>
    <property type="project" value="UniProtKB-UniRule"/>
</dbReference>
<dbReference type="GO" id="GO:0004252">
    <property type="term" value="F:serine-type endopeptidase activity"/>
    <property type="evidence" value="ECO:0007669"/>
    <property type="project" value="UniProtKB-UniRule"/>
</dbReference>
<dbReference type="GO" id="GO:0016558">
    <property type="term" value="P:protein import into peroxisome matrix"/>
    <property type="evidence" value="ECO:0007669"/>
    <property type="project" value="UniProtKB-UniRule"/>
</dbReference>
<dbReference type="GO" id="GO:0016485">
    <property type="term" value="P:protein processing"/>
    <property type="evidence" value="ECO:0007669"/>
    <property type="project" value="UniProtKB-UniRule"/>
</dbReference>
<dbReference type="GO" id="GO:0006515">
    <property type="term" value="P:protein quality control for misfolded or incompletely synthesized proteins"/>
    <property type="evidence" value="ECO:0007669"/>
    <property type="project" value="UniProtKB-UniRule"/>
</dbReference>
<dbReference type="CDD" id="cd19500">
    <property type="entry name" value="RecA-like_Lon"/>
    <property type="match status" value="1"/>
</dbReference>
<dbReference type="FunFam" id="3.40.50.300:FF:000021">
    <property type="entry name" value="Lon protease homolog"/>
    <property type="match status" value="1"/>
</dbReference>
<dbReference type="Gene3D" id="1.10.8.60">
    <property type="match status" value="1"/>
</dbReference>
<dbReference type="Gene3D" id="3.30.230.10">
    <property type="match status" value="1"/>
</dbReference>
<dbReference type="Gene3D" id="3.40.50.300">
    <property type="entry name" value="P-loop containing nucleotide triphosphate hydrolases"/>
    <property type="match status" value="1"/>
</dbReference>
<dbReference type="HAMAP" id="MF_03121">
    <property type="entry name" value="lonp2_euk"/>
    <property type="match status" value="1"/>
</dbReference>
<dbReference type="InterPro" id="IPR003593">
    <property type="entry name" value="AAA+_ATPase"/>
</dbReference>
<dbReference type="InterPro" id="IPR003959">
    <property type="entry name" value="ATPase_AAA_core"/>
</dbReference>
<dbReference type="InterPro" id="IPR054594">
    <property type="entry name" value="Lon_lid"/>
</dbReference>
<dbReference type="InterPro" id="IPR008269">
    <property type="entry name" value="Lon_proteolytic"/>
</dbReference>
<dbReference type="InterPro" id="IPR027065">
    <property type="entry name" value="Lon_Prtase"/>
</dbReference>
<dbReference type="InterPro" id="IPR003111">
    <property type="entry name" value="Lon_prtase_N"/>
</dbReference>
<dbReference type="InterPro" id="IPR027501">
    <property type="entry name" value="Lonp2_euk"/>
</dbReference>
<dbReference type="InterPro" id="IPR027417">
    <property type="entry name" value="P-loop_NTPase"/>
</dbReference>
<dbReference type="InterPro" id="IPR008268">
    <property type="entry name" value="Peptidase_S16_AS"/>
</dbReference>
<dbReference type="InterPro" id="IPR020568">
    <property type="entry name" value="Ribosomal_Su5_D2-typ_SF"/>
</dbReference>
<dbReference type="InterPro" id="IPR014721">
    <property type="entry name" value="Ribsml_uS5_D2-typ_fold_subgr"/>
</dbReference>
<dbReference type="PANTHER" id="PTHR10046">
    <property type="entry name" value="ATP DEPENDENT LON PROTEASE FAMILY MEMBER"/>
    <property type="match status" value="1"/>
</dbReference>
<dbReference type="Pfam" id="PF00004">
    <property type="entry name" value="AAA"/>
    <property type="match status" value="1"/>
</dbReference>
<dbReference type="Pfam" id="PF05362">
    <property type="entry name" value="Lon_C"/>
    <property type="match status" value="1"/>
</dbReference>
<dbReference type="Pfam" id="PF22667">
    <property type="entry name" value="Lon_lid"/>
    <property type="match status" value="1"/>
</dbReference>
<dbReference type="Pfam" id="PF02190">
    <property type="entry name" value="LON_substr_bdg"/>
    <property type="match status" value="1"/>
</dbReference>
<dbReference type="PRINTS" id="PR00830">
    <property type="entry name" value="ENDOLAPTASE"/>
</dbReference>
<dbReference type="SMART" id="SM00382">
    <property type="entry name" value="AAA"/>
    <property type="match status" value="1"/>
</dbReference>
<dbReference type="SUPFAM" id="SSF52540">
    <property type="entry name" value="P-loop containing nucleoside triphosphate hydrolases"/>
    <property type="match status" value="1"/>
</dbReference>
<dbReference type="SUPFAM" id="SSF54211">
    <property type="entry name" value="Ribosomal protein S5 domain 2-like"/>
    <property type="match status" value="1"/>
</dbReference>
<dbReference type="PROSITE" id="PS51787">
    <property type="entry name" value="LON_N"/>
    <property type="match status" value="1"/>
</dbReference>
<dbReference type="PROSITE" id="PS51786">
    <property type="entry name" value="LON_PROTEOLYTIC"/>
    <property type="match status" value="1"/>
</dbReference>
<dbReference type="PROSITE" id="PS01046">
    <property type="entry name" value="LON_SER"/>
    <property type="match status" value="1"/>
</dbReference>
<protein>
    <recommendedName>
        <fullName evidence="1">Lon protease homolog 2, peroxisomal</fullName>
        <ecNumber evidence="1">3.4.21.53</ecNumber>
    </recommendedName>
</protein>
<comment type="function">
    <text evidence="1">ATP-dependent serine protease that mediates the selective degradation of misfolded and unassembled polypeptides in the peroxisomal matrix. Necessary for type 2 peroxisome targeting signal (PTS2)-containing protein processing and facilitates peroxisome matrix protein import.</text>
</comment>
<comment type="catalytic activity">
    <reaction evidence="1">
        <text>Hydrolysis of proteins in presence of ATP.</text>
        <dbReference type="EC" id="3.4.21.53"/>
    </reaction>
</comment>
<comment type="subcellular location">
    <subcellularLocation>
        <location evidence="1">Peroxisome matrix</location>
    </subcellularLocation>
</comment>
<comment type="similarity">
    <text evidence="1">Belongs to the peptidase S16 family.</text>
</comment>
<name>LONP2_PICST</name>
<feature type="chain" id="PRO_0000395798" description="Lon protease homolog 2, peroxisomal">
    <location>
        <begin position="1"/>
        <end position="1180"/>
    </location>
</feature>
<feature type="domain" description="Lon N-terminal" evidence="3">
    <location>
        <begin position="19"/>
        <end position="366"/>
    </location>
</feature>
<feature type="domain" description="Lon proteolytic" evidence="2">
    <location>
        <begin position="924"/>
        <end position="1163"/>
    </location>
</feature>
<feature type="region of interest" description="Disordered" evidence="4">
    <location>
        <begin position="416"/>
        <end position="465"/>
    </location>
</feature>
<feature type="compositionally biased region" description="Low complexity" evidence="4">
    <location>
        <begin position="422"/>
        <end position="444"/>
    </location>
</feature>
<feature type="compositionally biased region" description="Acidic residues" evidence="4">
    <location>
        <begin position="452"/>
        <end position="465"/>
    </location>
</feature>
<feature type="active site" evidence="1">
    <location>
        <position position="1032"/>
    </location>
</feature>
<feature type="active site" evidence="1">
    <location>
        <position position="1075"/>
    </location>
</feature>
<feature type="binding site" evidence="1">
    <location>
        <begin position="667"/>
        <end position="674"/>
    </location>
    <ligand>
        <name>ATP</name>
        <dbReference type="ChEBI" id="CHEBI:30616"/>
    </ligand>
</feature>
<reference key="1">
    <citation type="journal article" date="2007" name="Nat. Biotechnol.">
        <title>Genome sequence of the lignocellulose-bioconverting and xylose-fermenting yeast Pichia stipitis.</title>
        <authorList>
            <person name="Jeffries T.W."/>
            <person name="Grigoriev I.V."/>
            <person name="Grimwood J."/>
            <person name="Laplaza J.M."/>
            <person name="Aerts A."/>
            <person name="Salamov A."/>
            <person name="Schmutz J."/>
            <person name="Lindquist E."/>
            <person name="Dehal P."/>
            <person name="Shapiro H."/>
            <person name="Jin Y.-S."/>
            <person name="Passoth V."/>
            <person name="Richardson P.M."/>
        </authorList>
    </citation>
    <scope>NUCLEOTIDE SEQUENCE [LARGE SCALE GENOMIC DNA]</scope>
    <source>
        <strain>ATCC 58785 / CBS 6054 / NBRC 10063 / NRRL Y-11545</strain>
    </source>
</reference>
<gene>
    <name type="ORF">PICST_45980</name>
</gene>
<sequence>MARYKNPKSPAKLKQQIVLPTCKLDSNLVLLPGIIYNVTFSRFKAAALLYRYKDLVSQVSIINNLLNEYEFNPSKDSDSVEEDDMVTSPITISKVAVEGIEQFFKYEAAFKNSQGLVSEKDIAEVAPSNEFDWLTLAIKPNLEKIKEPSNAQIDPTEHNSVVTIARIVGIVDDTTNIKLTLQAITRGLKIAPKKKTRPNEQLLEVDWSSDIPELRRHFKSLKDSSLDLFKVIDKFIVDYRQALSINSANGNKSNLQITKPGSRYKGANGSSQKPGDLLTLNPLANALYLQLAGSKDFSKAFLSLQKLYGQFASDENLKVDTKSYLRLLDLTCGILPFPNHEKLKLLHKISIDDRGNELINMINQLIKIFDTLDGNNSFVNHWFYNEATNIQKANVVANQLKSIRLLLEGMTNKTRPISNRGNIKSFNNSENGNNNKTNGSGITSRRPKSNEDGGEVYDEEDDDEEDDELRAITNFIKYKLPNITTLSPDSKRLIIKDFKRIRASSQSPGGGGNSDFHVIRNYLEIVMDIPWDKYVTKFKSNKDIDLNFAKKQLDDDHYGLEHVKKRLIQYLVVLKLLGINAEKQISDFRKENQVPSPSSSGSNLATQNSLVPASSIVIANNDETSFAHKQAQNKVKTSIKESNIENQTNQSIQVTKYNKSPIIMLAGPPGTGKTSLAKSIASSLGRNFQRISLGGVKDESEIRGHRRTYVGAMPGLIIQALRKSRSMNPVILLDEIDKVIGGSSGVNKFNGDPSAALLEVLDPEQNTSFIDHYLGFPVDLSQVIFICTANEPHNLTRPLLDRLEMIEVSAYDYNEKLIIGRKYLLPRQVKRNGFPASDRIEEFVNIDDASMKKIIVDYTREAGVRNLERKLGTICRFKAVEYCEGLSGKSFYNPNVEEADLPKYLGIPYSSGDFSSIETTISNNSRVGIVNGLSYNSDGSGSVLVFETIGFDKRVGNPNSSNTGCSLVMTGRLGEVLMESGKIGLTFIKSLIYKNLIQAKEQPDDKYLIEKFNNLELNLHVPMGSISKDGPSAGITMATSFLSVILDKPVPADVAMTGEITLRGLVLPIGGVKEKMMGAHLNGNIRRMIVPRENRKDLIEEFSRSVEEAGDVVDSNLMNELLKDNEEADFKMDKVEKFYLKRYGIQIFYAREFYDVMKILWGEDDLLTKPKSNRILEYHL</sequence>
<accession>A3LUF7</accession>
<organism>
    <name type="scientific">Scheffersomyces stipitis (strain ATCC 58785 / CBS 6054 / NBRC 10063 / NRRL Y-11545)</name>
    <name type="common">Yeast</name>
    <name type="synonym">Pichia stipitis</name>
    <dbReference type="NCBI Taxonomy" id="322104"/>
    <lineage>
        <taxon>Eukaryota</taxon>
        <taxon>Fungi</taxon>
        <taxon>Dikarya</taxon>
        <taxon>Ascomycota</taxon>
        <taxon>Saccharomycotina</taxon>
        <taxon>Pichiomycetes</taxon>
        <taxon>Debaryomycetaceae</taxon>
        <taxon>Scheffersomyces</taxon>
    </lineage>
</organism>
<evidence type="ECO:0000255" key="1">
    <source>
        <dbReference type="HAMAP-Rule" id="MF_03121"/>
    </source>
</evidence>
<evidence type="ECO:0000255" key="2">
    <source>
        <dbReference type="PROSITE-ProRule" id="PRU01122"/>
    </source>
</evidence>
<evidence type="ECO:0000255" key="3">
    <source>
        <dbReference type="PROSITE-ProRule" id="PRU01123"/>
    </source>
</evidence>
<evidence type="ECO:0000256" key="4">
    <source>
        <dbReference type="SAM" id="MobiDB-lite"/>
    </source>
</evidence>
<keyword id="KW-0067">ATP-binding</keyword>
<keyword id="KW-0378">Hydrolase</keyword>
<keyword id="KW-0547">Nucleotide-binding</keyword>
<keyword id="KW-0576">Peroxisome</keyword>
<keyword id="KW-0645">Protease</keyword>
<keyword id="KW-1185">Reference proteome</keyword>
<keyword id="KW-0720">Serine protease</keyword>
<proteinExistence type="inferred from homology"/>